<evidence type="ECO:0000255" key="1">
    <source>
        <dbReference type="HAMAP-Rule" id="MF_00170"/>
    </source>
</evidence>
<accession>Q1GF74</accession>
<dbReference type="EC" id="5.3.1.6" evidence="1"/>
<dbReference type="EMBL" id="CP000377">
    <property type="protein sequence ID" value="ABF64692.1"/>
    <property type="molecule type" value="Genomic_DNA"/>
</dbReference>
<dbReference type="RefSeq" id="WP_011539285.1">
    <property type="nucleotide sequence ID" value="NC_008044.1"/>
</dbReference>
<dbReference type="SMR" id="Q1GF74"/>
<dbReference type="STRING" id="292414.TM1040_1960"/>
<dbReference type="KEGG" id="sit:TM1040_1960"/>
<dbReference type="eggNOG" id="COG0120">
    <property type="taxonomic scope" value="Bacteria"/>
</dbReference>
<dbReference type="HOGENOM" id="CLU_056590_1_0_5"/>
<dbReference type="OrthoDB" id="5870696at2"/>
<dbReference type="UniPathway" id="UPA00115">
    <property type="reaction ID" value="UER00412"/>
</dbReference>
<dbReference type="Proteomes" id="UP000000636">
    <property type="component" value="Chromosome"/>
</dbReference>
<dbReference type="GO" id="GO:0005829">
    <property type="term" value="C:cytosol"/>
    <property type="evidence" value="ECO:0007669"/>
    <property type="project" value="TreeGrafter"/>
</dbReference>
<dbReference type="GO" id="GO:0004751">
    <property type="term" value="F:ribose-5-phosphate isomerase activity"/>
    <property type="evidence" value="ECO:0007669"/>
    <property type="project" value="UniProtKB-UniRule"/>
</dbReference>
<dbReference type="GO" id="GO:0006014">
    <property type="term" value="P:D-ribose metabolic process"/>
    <property type="evidence" value="ECO:0007669"/>
    <property type="project" value="TreeGrafter"/>
</dbReference>
<dbReference type="GO" id="GO:0009052">
    <property type="term" value="P:pentose-phosphate shunt, non-oxidative branch"/>
    <property type="evidence" value="ECO:0007669"/>
    <property type="project" value="UniProtKB-UniRule"/>
</dbReference>
<dbReference type="CDD" id="cd01398">
    <property type="entry name" value="RPI_A"/>
    <property type="match status" value="1"/>
</dbReference>
<dbReference type="FunFam" id="3.40.50.1360:FF:000001">
    <property type="entry name" value="Ribose-5-phosphate isomerase A"/>
    <property type="match status" value="1"/>
</dbReference>
<dbReference type="Gene3D" id="3.30.70.260">
    <property type="match status" value="1"/>
</dbReference>
<dbReference type="Gene3D" id="3.40.50.1360">
    <property type="match status" value="1"/>
</dbReference>
<dbReference type="HAMAP" id="MF_00170">
    <property type="entry name" value="Rib_5P_isom_A"/>
    <property type="match status" value="1"/>
</dbReference>
<dbReference type="InterPro" id="IPR037171">
    <property type="entry name" value="NagB/RpiA_transferase-like"/>
</dbReference>
<dbReference type="InterPro" id="IPR020672">
    <property type="entry name" value="Ribose5P_isomerase_typA_subgr"/>
</dbReference>
<dbReference type="InterPro" id="IPR004788">
    <property type="entry name" value="Ribose5P_isomerase_type_A"/>
</dbReference>
<dbReference type="NCBIfam" id="NF001924">
    <property type="entry name" value="PRK00702.1"/>
    <property type="match status" value="1"/>
</dbReference>
<dbReference type="NCBIfam" id="TIGR00021">
    <property type="entry name" value="rpiA"/>
    <property type="match status" value="1"/>
</dbReference>
<dbReference type="PANTHER" id="PTHR11934">
    <property type="entry name" value="RIBOSE-5-PHOSPHATE ISOMERASE"/>
    <property type="match status" value="1"/>
</dbReference>
<dbReference type="PANTHER" id="PTHR11934:SF0">
    <property type="entry name" value="RIBOSE-5-PHOSPHATE ISOMERASE"/>
    <property type="match status" value="1"/>
</dbReference>
<dbReference type="Pfam" id="PF06026">
    <property type="entry name" value="Rib_5-P_isom_A"/>
    <property type="match status" value="1"/>
</dbReference>
<dbReference type="SUPFAM" id="SSF75445">
    <property type="entry name" value="D-ribose-5-phosphate isomerase (RpiA), lid domain"/>
    <property type="match status" value="1"/>
</dbReference>
<dbReference type="SUPFAM" id="SSF100950">
    <property type="entry name" value="NagB/RpiA/CoA transferase-like"/>
    <property type="match status" value="1"/>
</dbReference>
<organism>
    <name type="scientific">Ruegeria sp. (strain TM1040)</name>
    <name type="common">Silicibacter sp.</name>
    <dbReference type="NCBI Taxonomy" id="292414"/>
    <lineage>
        <taxon>Bacteria</taxon>
        <taxon>Pseudomonadati</taxon>
        <taxon>Pseudomonadota</taxon>
        <taxon>Alphaproteobacteria</taxon>
        <taxon>Rhodobacterales</taxon>
        <taxon>Roseobacteraceae</taxon>
        <taxon>Ruegeria</taxon>
    </lineage>
</organism>
<name>RPIA_RUEST</name>
<feature type="chain" id="PRO_1000017001" description="Ribose-5-phosphate isomerase A">
    <location>
        <begin position="1"/>
        <end position="262"/>
    </location>
</feature>
<feature type="active site" description="Proton acceptor" evidence="1">
    <location>
        <position position="111"/>
    </location>
</feature>
<feature type="binding site" evidence="1">
    <location>
        <begin position="33"/>
        <end position="36"/>
    </location>
    <ligand>
        <name>substrate</name>
    </ligand>
</feature>
<feature type="binding site" evidence="1">
    <location>
        <begin position="89"/>
        <end position="92"/>
    </location>
    <ligand>
        <name>substrate</name>
    </ligand>
</feature>
<feature type="binding site" evidence="1">
    <location>
        <begin position="102"/>
        <end position="105"/>
    </location>
    <ligand>
        <name>substrate</name>
    </ligand>
</feature>
<feature type="binding site" evidence="1">
    <location>
        <position position="129"/>
    </location>
    <ligand>
        <name>substrate</name>
    </ligand>
</feature>
<keyword id="KW-0413">Isomerase</keyword>
<keyword id="KW-1185">Reference proteome</keyword>
<comment type="function">
    <text evidence="1">Catalyzes the reversible conversion of ribose-5-phosphate to ribulose 5-phosphate.</text>
</comment>
<comment type="catalytic activity">
    <reaction evidence="1">
        <text>aldehydo-D-ribose 5-phosphate = D-ribulose 5-phosphate</text>
        <dbReference type="Rhea" id="RHEA:14657"/>
        <dbReference type="ChEBI" id="CHEBI:58121"/>
        <dbReference type="ChEBI" id="CHEBI:58273"/>
        <dbReference type="EC" id="5.3.1.6"/>
    </reaction>
</comment>
<comment type="pathway">
    <text evidence="1">Carbohydrate degradation; pentose phosphate pathway; D-ribose 5-phosphate from D-ribulose 5-phosphate (non-oxidative stage): step 1/1.</text>
</comment>
<comment type="subunit">
    <text evidence="1">Homodimer.</text>
</comment>
<comment type="similarity">
    <text evidence="1">Belongs to the ribose 5-phosphate isomerase family.</text>
</comment>
<gene>
    <name evidence="1" type="primary">rpiA</name>
    <name type="ordered locus">TM1040_1960</name>
</gene>
<proteinExistence type="inferred from homology"/>
<reference key="1">
    <citation type="submission" date="2006-05" db="EMBL/GenBank/DDBJ databases">
        <title>Complete sequence of chromosome of Silicibacter sp. TM1040.</title>
        <authorList>
            <consortium name="US DOE Joint Genome Institute"/>
            <person name="Copeland A."/>
            <person name="Lucas S."/>
            <person name="Lapidus A."/>
            <person name="Barry K."/>
            <person name="Detter J.C."/>
            <person name="Glavina del Rio T."/>
            <person name="Hammon N."/>
            <person name="Israni S."/>
            <person name="Dalin E."/>
            <person name="Tice H."/>
            <person name="Pitluck S."/>
            <person name="Brettin T."/>
            <person name="Bruce D."/>
            <person name="Han C."/>
            <person name="Tapia R."/>
            <person name="Goodwin L."/>
            <person name="Thompson L.S."/>
            <person name="Gilna P."/>
            <person name="Schmutz J."/>
            <person name="Larimer F."/>
            <person name="Land M."/>
            <person name="Hauser L."/>
            <person name="Kyrpides N."/>
            <person name="Kim E."/>
            <person name="Belas R."/>
            <person name="Moran M.A."/>
            <person name="Buchan A."/>
            <person name="Gonzalez J.M."/>
            <person name="Schell M.A."/>
            <person name="Sun F."/>
            <person name="Richardson P."/>
        </authorList>
    </citation>
    <scope>NUCLEOTIDE SEQUENCE [LARGE SCALE GENOMIC DNA]</scope>
    <source>
        <strain>TM1040</strain>
    </source>
</reference>
<sequence>MSGDLSPIDKAKFVAAKRAAELVEDGMRVGLGTGSTAAWLVRCLGEMVREDGLKITGVPTSARTAELAREVGIELITLDEARWLDLTIDGADEFDSELNLIKGGGGALLQEKIVATASDQMVVIADKAKEVETLGAFPLPIEVIPFGWQTSQALVEETLISMDVMGRSSTLRMNGASPYVTDEGNHILDLHLNRIGNPRQLALVLNQIPGVVENGLFIDICDTVVIGYGDGKVEVRDINEGTIETDRIDFVETDNLFADLND</sequence>
<protein>
    <recommendedName>
        <fullName evidence="1">Ribose-5-phosphate isomerase A</fullName>
        <ecNumber evidence="1">5.3.1.6</ecNumber>
    </recommendedName>
    <alternativeName>
        <fullName evidence="1">Phosphoriboisomerase A</fullName>
        <shortName evidence="1">PRI</shortName>
    </alternativeName>
</protein>